<protein>
    <recommendedName>
        <fullName evidence="1">Light-independent protochlorophyllide reductase subunit B</fullName>
        <shortName evidence="1">DPOR subunit B</shortName>
        <shortName evidence="1">LI-POR subunit B</shortName>
        <ecNumber evidence="1">1.3.7.7</ecNumber>
    </recommendedName>
</protein>
<accession>Q00864</accession>
<dbReference type="EC" id="1.3.7.7" evidence="1"/>
<dbReference type="EMBL" id="D11467">
    <property type="protein sequence ID" value="BAA02020.1"/>
    <property type="molecule type" value="Genomic_DNA"/>
</dbReference>
<dbReference type="EMBL" id="D17510">
    <property type="protein sequence ID" value="BAA04310.1"/>
    <property type="molecule type" value="Genomic_DNA"/>
</dbReference>
<dbReference type="PIR" id="S29324">
    <property type="entry name" value="S29324"/>
</dbReference>
<dbReference type="RefSeq" id="NP_042351.1">
    <property type="nucleotide sequence ID" value="NC_001631.1"/>
</dbReference>
<dbReference type="SMR" id="Q00864"/>
<dbReference type="GeneID" id="809089"/>
<dbReference type="UniPathway" id="UPA00670"/>
<dbReference type="GO" id="GO:0009507">
    <property type="term" value="C:chloroplast"/>
    <property type="evidence" value="ECO:0007669"/>
    <property type="project" value="UniProtKB-SubCell"/>
</dbReference>
<dbReference type="GO" id="GO:0051539">
    <property type="term" value="F:4 iron, 4 sulfur cluster binding"/>
    <property type="evidence" value="ECO:0007669"/>
    <property type="project" value="UniProtKB-UniRule"/>
</dbReference>
<dbReference type="GO" id="GO:0005524">
    <property type="term" value="F:ATP binding"/>
    <property type="evidence" value="ECO:0007669"/>
    <property type="project" value="UniProtKB-UniRule"/>
</dbReference>
<dbReference type="GO" id="GO:0046872">
    <property type="term" value="F:metal ion binding"/>
    <property type="evidence" value="ECO:0007669"/>
    <property type="project" value="UniProtKB-KW"/>
</dbReference>
<dbReference type="GO" id="GO:0016730">
    <property type="term" value="F:oxidoreductase activity, acting on iron-sulfur proteins as donors"/>
    <property type="evidence" value="ECO:0007669"/>
    <property type="project" value="InterPro"/>
</dbReference>
<dbReference type="GO" id="GO:0016636">
    <property type="term" value="F:oxidoreductase activity, acting on the CH-CH group of donors, iron-sulfur protein as acceptor"/>
    <property type="evidence" value="ECO:0007669"/>
    <property type="project" value="UniProtKB-UniRule"/>
</dbReference>
<dbReference type="GO" id="GO:0036068">
    <property type="term" value="P:light-independent chlorophyll biosynthetic process"/>
    <property type="evidence" value="ECO:0007669"/>
    <property type="project" value="UniProtKB-UniRule"/>
</dbReference>
<dbReference type="GO" id="GO:0019685">
    <property type="term" value="P:photosynthesis, dark reaction"/>
    <property type="evidence" value="ECO:0007669"/>
    <property type="project" value="InterPro"/>
</dbReference>
<dbReference type="CDD" id="cd01981">
    <property type="entry name" value="Pchlide_reductase_B"/>
    <property type="match status" value="1"/>
</dbReference>
<dbReference type="Gene3D" id="1.20.89.20">
    <property type="match status" value="1"/>
</dbReference>
<dbReference type="Gene3D" id="3.40.50.1980">
    <property type="entry name" value="Nitrogenase molybdenum iron protein domain"/>
    <property type="match status" value="3"/>
</dbReference>
<dbReference type="Gene3D" id="1.10.8.550">
    <property type="entry name" value="Proto-chlorophyllide reductase 57 kD subunit B"/>
    <property type="match status" value="1"/>
</dbReference>
<dbReference type="HAMAP" id="MF_00353">
    <property type="entry name" value="ChlB_BchB"/>
    <property type="match status" value="1"/>
</dbReference>
<dbReference type="InterPro" id="IPR050152">
    <property type="entry name" value="ChlB/BchB/BchZ"/>
</dbReference>
<dbReference type="InterPro" id="IPR013580">
    <property type="entry name" value="LI-POR_suB-like_C"/>
</dbReference>
<dbReference type="InterPro" id="IPR000510">
    <property type="entry name" value="Nase/OxRdtase_comp1"/>
</dbReference>
<dbReference type="InterPro" id="IPR042298">
    <property type="entry name" value="P-CP_red_C"/>
</dbReference>
<dbReference type="InterPro" id="IPR005969">
    <property type="entry name" value="Protochl_reductB"/>
</dbReference>
<dbReference type="InterPro" id="IPR016209">
    <property type="entry name" value="Protochlorophyllide_Rdtase"/>
</dbReference>
<dbReference type="NCBIfam" id="TIGR01278">
    <property type="entry name" value="DPOR_BchB"/>
    <property type="match status" value="1"/>
</dbReference>
<dbReference type="PANTHER" id="PTHR33712">
    <property type="entry name" value="LIGHT-INDEPENDENT PROTOCHLOROPHYLLIDE REDUCTASE SUBUNIT B"/>
    <property type="match status" value="1"/>
</dbReference>
<dbReference type="PANTHER" id="PTHR33712:SF7">
    <property type="entry name" value="LIGHT-INDEPENDENT PROTOCHLOROPHYLLIDE REDUCTASE SUBUNIT B"/>
    <property type="match status" value="1"/>
</dbReference>
<dbReference type="Pfam" id="PF00148">
    <property type="entry name" value="Oxidored_nitro"/>
    <property type="match status" value="1"/>
</dbReference>
<dbReference type="Pfam" id="PF08369">
    <property type="entry name" value="PCP_red"/>
    <property type="match status" value="1"/>
</dbReference>
<dbReference type="PIRSF" id="PIRSF000163">
    <property type="entry name" value="PCP_ChlB"/>
    <property type="match status" value="1"/>
</dbReference>
<dbReference type="SUPFAM" id="SSF53807">
    <property type="entry name" value="Helical backbone' metal receptor"/>
    <property type="match status" value="1"/>
</dbReference>
<reference key="1">
    <citation type="journal article" date="1992" name="Mol. Gen. Genet.">
        <title>Chloroplast DNA of black pine retains a residual inverted repeat lacking rRNA genes: nucleotide sequences of trnQ, trnK, psbA, trnI and trnH and the absence of rps16.</title>
        <authorList>
            <person name="Tsudzuki J."/>
            <person name="Nakashima K."/>
            <person name="Tsudzuki T."/>
            <person name="Hiratsuka J."/>
            <person name="Shibata M."/>
            <person name="Wakasugi T."/>
            <person name="Sugiura M."/>
        </authorList>
    </citation>
    <scope>NUCLEOTIDE SEQUENCE [GENOMIC DNA]</scope>
</reference>
<reference key="2">
    <citation type="journal article" date="1994" name="Proc. Natl. Acad. Sci. U.S.A.">
        <title>Loss of all ndh genes as determined by sequencing the entire chloroplast genome of the black pine Pinus thunbergii.</title>
        <authorList>
            <person name="Wakasugi T."/>
            <person name="Tsudzuki J."/>
            <person name="Ito S."/>
            <person name="Nakashima K."/>
            <person name="Tsudzuki T."/>
            <person name="Sugiura M."/>
        </authorList>
    </citation>
    <scope>NUCLEOTIDE SEQUENCE [LARGE SCALE GENOMIC DNA]</scope>
</reference>
<feature type="chain" id="PRO_0000219839" description="Light-independent protochlorophyllide reductase subunit B">
    <location>
        <begin position="1"/>
        <end position="510"/>
    </location>
</feature>
<feature type="active site" description="Proton donor" evidence="1">
    <location>
        <position position="297"/>
    </location>
</feature>
<feature type="binding site" evidence="1">
    <location>
        <position position="36"/>
    </location>
    <ligand>
        <name>[4Fe-4S] cluster</name>
        <dbReference type="ChEBI" id="CHEBI:49883"/>
        <note>ligand shared with heterodimeric partner</note>
    </ligand>
</feature>
<feature type="binding site" evidence="1">
    <location>
        <begin position="432"/>
        <end position="433"/>
    </location>
    <ligand>
        <name>substrate</name>
    </ligand>
</feature>
<gene>
    <name evidence="1" type="primary">chlB</name>
</gene>
<keyword id="KW-0004">4Fe-4S</keyword>
<keyword id="KW-0067">ATP-binding</keyword>
<keyword id="KW-0149">Chlorophyll biosynthesis</keyword>
<keyword id="KW-0150">Chloroplast</keyword>
<keyword id="KW-0408">Iron</keyword>
<keyword id="KW-0411">Iron-sulfur</keyword>
<keyword id="KW-0479">Metal-binding</keyword>
<keyword id="KW-0547">Nucleotide-binding</keyword>
<keyword id="KW-0560">Oxidoreductase</keyword>
<keyword id="KW-0602">Photosynthesis</keyword>
<keyword id="KW-0934">Plastid</keyword>
<proteinExistence type="inferred from homology"/>
<evidence type="ECO:0000255" key="1">
    <source>
        <dbReference type="HAMAP-Rule" id="MF_00353"/>
    </source>
</evidence>
<sequence>MKLAHWMYAGPAHIGTLRVASSFKNVHAIMHAPLGDDYFNVMRSMLERERNFTPATASIVDRHVLARGSRKRVVDHIIRKDKEEGPDLIILTPTCTSSILQEDLKNFVDRASIISDCNVIFADVDHYQVNEIQAADRTLEQVVRYYLEKSHTLDQFVTDAPSVNIIGILTLGFHNRHDCRELRRLLKDLDIRINQIIPEGGSVEDPKNLPKARFNLIPYREVGLMTAMYLNKEFGMPYVSTTPMGAVDMAECIRQIKKSLETLAAPILSSKRVDYESYIDGQTRFVSQAAWFSRSIDCQNFTGKETVVFGDATHAASITKILAREMGIRVSCTGTYCKHDAEWFKEQIKDFCDEIIITDDHAEVGDIISRVEPSAIFGTQMERHIGKRLEIPCGVISAPAHIQNFSLGYRPFLGYEGTNQIADLVYNSFALGMEDHLLDIFCGHDTKEIMTKSLSTDISPIWDPESRQELGKIPRFVRDEVKRNTEKFARRKGILNVTVEVMHAAKEALS</sequence>
<name>CHLB_PINTH</name>
<comment type="function">
    <text evidence="1">Component of the dark-operative protochlorophyllide reductase (DPOR) that uses Mg-ATP and reduced ferredoxin to reduce ring D of protochlorophyllide (Pchlide) to form chlorophyllide a (Chlide). This reaction is light-independent. The NB-protein (ChlN-ChlB) is the catalytic component of the complex.</text>
</comment>
<comment type="catalytic activity">
    <reaction evidence="1">
        <text>chlorophyllide a + oxidized 2[4Fe-4S]-[ferredoxin] + 2 ADP + 2 phosphate = protochlorophyllide a + reduced 2[4Fe-4S]-[ferredoxin] + 2 ATP + 2 H2O</text>
        <dbReference type="Rhea" id="RHEA:28202"/>
        <dbReference type="Rhea" id="RHEA-COMP:10002"/>
        <dbReference type="Rhea" id="RHEA-COMP:10004"/>
        <dbReference type="ChEBI" id="CHEBI:15377"/>
        <dbReference type="ChEBI" id="CHEBI:30616"/>
        <dbReference type="ChEBI" id="CHEBI:33722"/>
        <dbReference type="ChEBI" id="CHEBI:33723"/>
        <dbReference type="ChEBI" id="CHEBI:43474"/>
        <dbReference type="ChEBI" id="CHEBI:83348"/>
        <dbReference type="ChEBI" id="CHEBI:83350"/>
        <dbReference type="ChEBI" id="CHEBI:456216"/>
        <dbReference type="EC" id="1.3.7.7"/>
    </reaction>
</comment>
<comment type="cofactor">
    <cofactor evidence="1">
        <name>[4Fe-4S] cluster</name>
        <dbReference type="ChEBI" id="CHEBI:49883"/>
    </cofactor>
    <text evidence="1">Binds 1 [4Fe-4S] cluster per heterodimer. The cluster is bound at the heterodimer interface by residues from both subunits.</text>
</comment>
<comment type="pathway">
    <text evidence="1">Porphyrin-containing compound metabolism; chlorophyll biosynthesis (light-independent).</text>
</comment>
<comment type="subunit">
    <text evidence="1">Protochlorophyllide reductase is composed of three subunits; ChlL, ChlN and ChlB. Forms a heterotetramer of two ChlB and two ChlN subunits.</text>
</comment>
<comment type="subcellular location">
    <subcellularLocation>
        <location>Plastid</location>
        <location>Chloroplast</location>
    </subcellularLocation>
</comment>
<comment type="similarity">
    <text evidence="1">Belongs to the ChlB/BchB/BchZ family.</text>
</comment>
<organism>
    <name type="scientific">Pinus thunbergii</name>
    <name type="common">Japanese black pine</name>
    <name type="synonym">Pinus thunbergiana</name>
    <dbReference type="NCBI Taxonomy" id="3350"/>
    <lineage>
        <taxon>Eukaryota</taxon>
        <taxon>Viridiplantae</taxon>
        <taxon>Streptophyta</taxon>
        <taxon>Embryophyta</taxon>
        <taxon>Tracheophyta</taxon>
        <taxon>Spermatophyta</taxon>
        <taxon>Pinopsida</taxon>
        <taxon>Pinidae</taxon>
        <taxon>Conifers I</taxon>
        <taxon>Pinales</taxon>
        <taxon>Pinaceae</taxon>
        <taxon>Pinus</taxon>
        <taxon>Pinus subgen. Pinus</taxon>
    </lineage>
</organism>
<geneLocation type="chloroplast"/>